<dbReference type="EC" id="3.5.1.15"/>
<dbReference type="EMBL" id="CR942438">
    <property type="protein sequence ID" value="CAJ82275.1"/>
    <property type="molecule type" value="mRNA"/>
</dbReference>
<dbReference type="EMBL" id="BC159075">
    <property type="protein sequence ID" value="AAI59076.1"/>
    <property type="molecule type" value="mRNA"/>
</dbReference>
<dbReference type="RefSeq" id="NP_001039114.1">
    <property type="nucleotide sequence ID" value="NM_001045649.1"/>
</dbReference>
<dbReference type="RefSeq" id="XP_012812619.1">
    <property type="nucleotide sequence ID" value="XM_012957165.2"/>
</dbReference>
<dbReference type="SMR" id="Q28C61"/>
<dbReference type="FunCoup" id="Q28C61">
    <property type="interactions" value="372"/>
</dbReference>
<dbReference type="STRING" id="8364.ENSXETP00000012487"/>
<dbReference type="PaxDb" id="8364-ENSXETP00000012735"/>
<dbReference type="GeneID" id="733935"/>
<dbReference type="KEGG" id="xtr:733935"/>
<dbReference type="CTD" id="443"/>
<dbReference type="eggNOG" id="ENOG502QRAK">
    <property type="taxonomic scope" value="Eukaryota"/>
</dbReference>
<dbReference type="HOGENOM" id="CLU_083292_0_0_1"/>
<dbReference type="InParanoid" id="Q28C61"/>
<dbReference type="OrthoDB" id="8300214at2759"/>
<dbReference type="TreeFam" id="TF328708"/>
<dbReference type="Reactome" id="R-XTR-8963693">
    <property type="pathway name" value="Aspartate and asparagine metabolism"/>
</dbReference>
<dbReference type="Proteomes" id="UP000008143">
    <property type="component" value="Chromosome 2"/>
</dbReference>
<dbReference type="GO" id="GO:0005737">
    <property type="term" value="C:cytoplasm"/>
    <property type="evidence" value="ECO:0007669"/>
    <property type="project" value="UniProtKB-SubCell"/>
</dbReference>
<dbReference type="GO" id="GO:0005634">
    <property type="term" value="C:nucleus"/>
    <property type="evidence" value="ECO:0007669"/>
    <property type="project" value="UniProtKB-SubCell"/>
</dbReference>
<dbReference type="GO" id="GO:0019807">
    <property type="term" value="F:aspartoacylase activity"/>
    <property type="evidence" value="ECO:0007669"/>
    <property type="project" value="UniProtKB-EC"/>
</dbReference>
<dbReference type="GO" id="GO:0016788">
    <property type="term" value="F:hydrolase activity, acting on ester bonds"/>
    <property type="evidence" value="ECO:0007669"/>
    <property type="project" value="InterPro"/>
</dbReference>
<dbReference type="GO" id="GO:0046872">
    <property type="term" value="F:metal ion binding"/>
    <property type="evidence" value="ECO:0007669"/>
    <property type="project" value="UniProtKB-KW"/>
</dbReference>
<dbReference type="CDD" id="cd06909">
    <property type="entry name" value="M14_ASPA"/>
    <property type="match status" value="1"/>
</dbReference>
<dbReference type="FunFam" id="2.20.25.160:FF:000001">
    <property type="entry name" value="Aspartoacylase"/>
    <property type="match status" value="1"/>
</dbReference>
<dbReference type="FunFam" id="3.40.630.10:FF:000025">
    <property type="entry name" value="aspartoacylase"/>
    <property type="match status" value="1"/>
</dbReference>
<dbReference type="Gene3D" id="2.20.25.160">
    <property type="match status" value="1"/>
</dbReference>
<dbReference type="Gene3D" id="3.40.630.10">
    <property type="entry name" value="Zn peptidases"/>
    <property type="match status" value="1"/>
</dbReference>
<dbReference type="HAMAP" id="MF_00704">
    <property type="entry name" value="Aspartoacylase"/>
    <property type="match status" value="1"/>
</dbReference>
<dbReference type="InterPro" id="IPR050178">
    <property type="entry name" value="AspA/AstE_fam"/>
</dbReference>
<dbReference type="InterPro" id="IPR016708">
    <property type="entry name" value="Aspartoacylase"/>
</dbReference>
<dbReference type="InterPro" id="IPR055438">
    <property type="entry name" value="AstE_AspA_cat"/>
</dbReference>
<dbReference type="InterPro" id="IPR007036">
    <property type="entry name" value="Aste_AspA_hybrid_dom"/>
</dbReference>
<dbReference type="NCBIfam" id="NF002601">
    <property type="entry name" value="PRK02259.1"/>
    <property type="match status" value="1"/>
</dbReference>
<dbReference type="PANTHER" id="PTHR15162">
    <property type="entry name" value="ASPARTOACYLASE"/>
    <property type="match status" value="1"/>
</dbReference>
<dbReference type="PANTHER" id="PTHR15162:SF9">
    <property type="entry name" value="ASPARTOACYLASE"/>
    <property type="match status" value="1"/>
</dbReference>
<dbReference type="Pfam" id="PF24827">
    <property type="entry name" value="AstE_AspA_cat"/>
    <property type="match status" value="1"/>
</dbReference>
<dbReference type="Pfam" id="PF04952">
    <property type="entry name" value="AstE_AspA_hybrid"/>
    <property type="match status" value="1"/>
</dbReference>
<dbReference type="PIRSF" id="PIRSF018001">
    <property type="entry name" value="Aspartoacylase"/>
    <property type="match status" value="1"/>
</dbReference>
<dbReference type="SUPFAM" id="SSF53187">
    <property type="entry name" value="Zn-dependent exopeptidases"/>
    <property type="match status" value="1"/>
</dbReference>
<reference key="1">
    <citation type="submission" date="2006-10" db="EMBL/GenBank/DDBJ databases">
        <authorList>
            <consortium name="Sanger Xenopus tropicalis EST/cDNA project"/>
        </authorList>
    </citation>
    <scope>NUCLEOTIDE SEQUENCE [LARGE SCALE MRNA]</scope>
    <source>
        <tissue>Egg</tissue>
    </source>
</reference>
<reference key="2">
    <citation type="submission" date="2008-02" db="EMBL/GenBank/DDBJ databases">
        <authorList>
            <consortium name="NIH - Xenopus Gene Collection (XGC) project"/>
        </authorList>
    </citation>
    <scope>NUCLEOTIDE SEQUENCE [LARGE SCALE MRNA]</scope>
    <source>
        <tissue>Embryo</tissue>
    </source>
</reference>
<proteinExistence type="evidence at transcript level"/>
<evidence type="ECO:0000250" key="1"/>
<evidence type="ECO:0000305" key="2"/>
<name>ACY2_XENTR</name>
<accession>Q28C61</accession>
<accession>B0JZ84</accession>
<organism>
    <name type="scientific">Xenopus tropicalis</name>
    <name type="common">Western clawed frog</name>
    <name type="synonym">Silurana tropicalis</name>
    <dbReference type="NCBI Taxonomy" id="8364"/>
    <lineage>
        <taxon>Eukaryota</taxon>
        <taxon>Metazoa</taxon>
        <taxon>Chordata</taxon>
        <taxon>Craniata</taxon>
        <taxon>Vertebrata</taxon>
        <taxon>Euteleostomi</taxon>
        <taxon>Amphibia</taxon>
        <taxon>Batrachia</taxon>
        <taxon>Anura</taxon>
        <taxon>Pipoidea</taxon>
        <taxon>Pipidae</taxon>
        <taxon>Xenopodinae</taxon>
        <taxon>Xenopus</taxon>
        <taxon>Silurana</taxon>
    </lineage>
</organism>
<sequence length="313" mass="35472">MTARRVLNPVQRVAIFGGTHGNELSGVFLVNHWLKHGEEIARPGIEVRPFITNPGAVEKCVRYVDTDLNRVFDSENLRNENNLNLSYEVKRAQYINSIFGPKGSEDAYDVILDLHNTTSHMGATLILEDSKDDFTIQMFNYIKTSMAPLACSVLLIEHPRLKYATTRSIAKHPIGVEVGPQPQGVLRADVLDKMRRIIKHALDFINYFNDGKEFLPCILEVFKVLDNVAYPRNANGDCTAIIHNNLQDQDWKELKPGDPMFLTLDGRMIAYEGDCIVYPTFINEAAYYEKNQAFTTTQKMTLCAQAIRCTEPK</sequence>
<comment type="function">
    <text evidence="1">Catalyzes the deacetylation of N-acetylaspartic acid (NAA) to produce acetate and L-aspartate.</text>
</comment>
<comment type="catalytic activity">
    <reaction>
        <text>an N-acyl-L-aspartate + H2O = a carboxylate + L-aspartate</text>
        <dbReference type="Rhea" id="RHEA:10872"/>
        <dbReference type="ChEBI" id="CHEBI:15377"/>
        <dbReference type="ChEBI" id="CHEBI:29067"/>
        <dbReference type="ChEBI" id="CHEBI:29991"/>
        <dbReference type="ChEBI" id="CHEBI:58497"/>
        <dbReference type="EC" id="3.5.1.15"/>
    </reaction>
</comment>
<comment type="cofactor">
    <cofactor evidence="1">
        <name>Zn(2+)</name>
        <dbReference type="ChEBI" id="CHEBI:29105"/>
    </cofactor>
    <text evidence="1">Binds 1 zinc ion per subunit.</text>
</comment>
<comment type="subcellular location">
    <subcellularLocation>
        <location>Cytoplasm</location>
    </subcellularLocation>
    <subcellularLocation>
        <location evidence="1">Nucleus</location>
    </subcellularLocation>
</comment>
<comment type="similarity">
    <text evidence="2">Belongs to the AspA/AstE family. Aspartoacylase subfamily.</text>
</comment>
<gene>
    <name type="primary">aspa</name>
    <name type="ORF">TEgg122g12.1</name>
</gene>
<protein>
    <recommendedName>
        <fullName>Aspartoacylase</fullName>
        <ecNumber>3.5.1.15</ecNumber>
    </recommendedName>
    <alternativeName>
        <fullName>Aminoacylase-2</fullName>
        <shortName>ACY-2</shortName>
    </alternativeName>
</protein>
<feature type="chain" id="PRO_0000363361" description="Aspartoacylase">
    <location>
        <begin position="1"/>
        <end position="313"/>
    </location>
</feature>
<feature type="active site" evidence="1">
    <location>
        <position position="177"/>
    </location>
</feature>
<feature type="binding site" evidence="1">
    <location>
        <position position="20"/>
    </location>
    <ligand>
        <name>Zn(2+)</name>
        <dbReference type="ChEBI" id="CHEBI:29105"/>
    </ligand>
</feature>
<feature type="binding site" evidence="1">
    <location>
        <position position="23"/>
    </location>
    <ligand>
        <name>Zn(2+)</name>
        <dbReference type="ChEBI" id="CHEBI:29105"/>
    </ligand>
</feature>
<feature type="binding site" evidence="1">
    <location>
        <position position="62"/>
    </location>
    <ligand>
        <name>substrate</name>
    </ligand>
</feature>
<feature type="binding site" evidence="1">
    <location>
        <begin position="69"/>
        <end position="70"/>
    </location>
    <ligand>
        <name>substrate</name>
    </ligand>
</feature>
<feature type="binding site" evidence="1">
    <location>
        <position position="115"/>
    </location>
    <ligand>
        <name>Zn(2+)</name>
        <dbReference type="ChEBI" id="CHEBI:29105"/>
    </ligand>
</feature>
<feature type="binding site" evidence="1">
    <location>
        <begin position="163"/>
        <end position="167"/>
    </location>
    <ligand>
        <name>substrate</name>
    </ligand>
</feature>
<feature type="binding site" evidence="1">
    <location>
        <position position="177"/>
    </location>
    <ligand>
        <name>substrate</name>
    </ligand>
</feature>
<feature type="binding site" evidence="1">
    <location>
        <position position="287"/>
    </location>
    <ligand>
        <name>substrate</name>
    </ligand>
</feature>
<feature type="sequence conflict" description="In Ref. 1; CAJ82275." evidence="2" ref="1">
    <original>K</original>
    <variation>N</variation>
    <location>
        <position position="252"/>
    </location>
</feature>
<feature type="sequence conflict" description="In Ref. 2; AAI59076." evidence="2" ref="2">
    <original>A</original>
    <variation>V</variation>
    <location>
        <position position="270"/>
    </location>
</feature>
<feature type="sequence conflict" description="In Ref. 1; CAJ82275." evidence="2" ref="1">
    <original>A</original>
    <variation>S</variation>
    <location>
        <position position="306"/>
    </location>
</feature>
<keyword id="KW-0963">Cytoplasm</keyword>
<keyword id="KW-0378">Hydrolase</keyword>
<keyword id="KW-0479">Metal-binding</keyword>
<keyword id="KW-0539">Nucleus</keyword>
<keyword id="KW-1185">Reference proteome</keyword>
<keyword id="KW-0862">Zinc</keyword>